<sequence>MDIVNIAWAALMVVSTSSLSPVAWGRSGL</sequence>
<proteinExistence type="evidence at transcript level"/>
<protein>
    <recommendedName>
        <fullName>Cytochrome b6-f complex subunit 8</fullName>
    </recommendedName>
    <alternativeName>
        <fullName>Cytochrome b6-f complex subunit PetN</fullName>
    </alternativeName>
    <alternativeName>
        <fullName>Cytochrome b6-f complex subunit VIII</fullName>
    </alternativeName>
</protein>
<accession>Q85A91</accession>
<dbReference type="EMBL" id="AB086179">
    <property type="protein sequence ID" value="BAC55325.1"/>
    <property type="molecule type" value="Genomic_DNA"/>
</dbReference>
<dbReference type="EMBL" id="AB087417">
    <property type="protein sequence ID" value="BAC55415.1"/>
    <property type="molecule type" value="Transcribed_RNA"/>
</dbReference>
<dbReference type="RefSeq" id="NP_777389.1">
    <property type="nucleotide sequence ID" value="NC_004543.1"/>
</dbReference>
<dbReference type="GeneID" id="2553389"/>
<dbReference type="GO" id="GO:0009535">
    <property type="term" value="C:chloroplast thylakoid membrane"/>
    <property type="evidence" value="ECO:0007669"/>
    <property type="project" value="UniProtKB-SubCell"/>
</dbReference>
<dbReference type="GO" id="GO:0009512">
    <property type="term" value="C:cytochrome b6f complex"/>
    <property type="evidence" value="ECO:0007669"/>
    <property type="project" value="InterPro"/>
</dbReference>
<dbReference type="GO" id="GO:0045158">
    <property type="term" value="F:electron transporter, transferring electrons within cytochrome b6/f complex of photosystem II activity"/>
    <property type="evidence" value="ECO:0007669"/>
    <property type="project" value="InterPro"/>
</dbReference>
<dbReference type="GO" id="GO:0017004">
    <property type="term" value="P:cytochrome complex assembly"/>
    <property type="evidence" value="ECO:0007669"/>
    <property type="project" value="UniProtKB-UniRule"/>
</dbReference>
<dbReference type="GO" id="GO:0015979">
    <property type="term" value="P:photosynthesis"/>
    <property type="evidence" value="ECO:0007669"/>
    <property type="project" value="UniProtKB-KW"/>
</dbReference>
<dbReference type="HAMAP" id="MF_00395">
    <property type="entry name" value="Cytb6_f_PetN"/>
    <property type="match status" value="1"/>
</dbReference>
<dbReference type="InterPro" id="IPR036143">
    <property type="entry name" value="Cytochr_b6-f_cplx_su8_sf"/>
</dbReference>
<dbReference type="InterPro" id="IPR005497">
    <property type="entry name" value="Cytochrome_b6-f_cplx_su8"/>
</dbReference>
<dbReference type="Pfam" id="PF03742">
    <property type="entry name" value="PetN"/>
    <property type="match status" value="1"/>
</dbReference>
<dbReference type="SUPFAM" id="SSF103451">
    <property type="entry name" value="PetN subunit of the cytochrome b6f complex"/>
    <property type="match status" value="1"/>
</dbReference>
<reference key="1">
    <citation type="journal article" date="2003" name="Nucleic Acids Res.">
        <title>The complete nucleotide sequence of the hornwort (Anthoceros formosae) chloroplast genome: insight into the earliest land plants.</title>
        <authorList>
            <person name="Kugita M."/>
            <person name="Kaneko A."/>
            <person name="Yamamoto Y."/>
            <person name="Takeya Y."/>
            <person name="Matsumoto T."/>
            <person name="Yoshinaga K."/>
        </authorList>
    </citation>
    <scope>NUCLEOTIDE SEQUENCE [LARGE SCALE GENOMIC DNA]</scope>
</reference>
<reference key="2">
    <citation type="journal article" date="2003" name="Nucleic Acids Res.">
        <title>RNA editing in hornwort chloroplasts makes more than half the genes functional.</title>
        <authorList>
            <person name="Kugita M."/>
            <person name="Yamamoto Y."/>
            <person name="Fujikawa T."/>
            <person name="Matsumoto T."/>
            <person name="Yoshinaga K."/>
        </authorList>
    </citation>
    <scope>NUCLEOTIDE SEQUENCE [MRNA]</scope>
    <scope>ABSENCE OF RNA EDITING</scope>
    <source>
        <tissue>Thallus</tissue>
    </source>
</reference>
<name>PETN_ANTAG</name>
<comment type="function">
    <text evidence="1">Component of the cytochrome b6-f complex, which mediates electron transfer between photosystem II (PSII) and photosystem I (PSI), cyclic electron flow around PSI, and state transitions.</text>
</comment>
<comment type="subunit">
    <text evidence="1">The 4 large subunits of the cytochrome b6-f complex are cytochrome b6, subunit IV (17 kDa polypeptide, PetD), cytochrome f and the Rieske protein, while the 4 small subunits are PetG, PetL, PetM and PetN. The complex functions as a dimer (By similarity).</text>
</comment>
<comment type="subcellular location">
    <subcellularLocation>
        <location evidence="1">Plastid</location>
        <location evidence="1">Chloroplast thylakoid membrane</location>
        <topology evidence="1">Single-pass membrane protein</topology>
    </subcellularLocation>
</comment>
<comment type="similarity">
    <text evidence="3">Belongs to the PetN family.</text>
</comment>
<keyword id="KW-0150">Chloroplast</keyword>
<keyword id="KW-0249">Electron transport</keyword>
<keyword id="KW-0472">Membrane</keyword>
<keyword id="KW-0602">Photosynthesis</keyword>
<keyword id="KW-0934">Plastid</keyword>
<keyword id="KW-0793">Thylakoid</keyword>
<keyword id="KW-0812">Transmembrane</keyword>
<keyword id="KW-1133">Transmembrane helix</keyword>
<keyword id="KW-0813">Transport</keyword>
<evidence type="ECO:0000250" key="1"/>
<evidence type="ECO:0000255" key="2"/>
<evidence type="ECO:0000305" key="3"/>
<gene>
    <name type="primary">petN</name>
</gene>
<geneLocation type="chloroplast"/>
<organism>
    <name type="scientific">Anthoceros angustus</name>
    <name type="common">Hornwort</name>
    <name type="synonym">Anthoceros formosae</name>
    <dbReference type="NCBI Taxonomy" id="48387"/>
    <lineage>
        <taxon>Eukaryota</taxon>
        <taxon>Viridiplantae</taxon>
        <taxon>Streptophyta</taxon>
        <taxon>Embryophyta</taxon>
        <taxon>Anthocerotophyta</taxon>
        <taxon>Anthocerotopsida</taxon>
        <taxon>Anthocerotidae</taxon>
        <taxon>Anthocerotales</taxon>
        <taxon>Anthocerotaceae</taxon>
        <taxon>Anthoceros</taxon>
    </lineage>
</organism>
<feature type="chain" id="PRO_0000217098" description="Cytochrome b6-f complex subunit 8">
    <location>
        <begin position="1"/>
        <end position="29"/>
    </location>
</feature>
<feature type="transmembrane region" description="Helical" evidence="2">
    <location>
        <begin position="3"/>
        <end position="23"/>
    </location>
</feature>